<evidence type="ECO:0000250" key="1"/>
<evidence type="ECO:0000255" key="2">
    <source>
        <dbReference type="PROSITE-ProRule" id="PRU00214"/>
    </source>
</evidence>
<evidence type="ECO:0000305" key="3"/>
<proteinExistence type="inferred from homology"/>
<gene>
    <name type="primary">sumo3</name>
    <name type="ORF">TEgg028f07.1</name>
</gene>
<comment type="function">
    <text evidence="1">Ubiquitin-like protein which can be covalently attached to target lysines either as a monomer or as a lysine-linked polymer. Does not seem to be involved in protein degradation and may function as an antagonist of ubiquitin in the degradation process. Plays a role in a number of cellular processes such as nuclear transport, DNA replication and repair, mitosis and signal transduction. Covalent attachment to its substrates requires prior activation by the E1 complex sae1-sae2 and linkage to the E2 enzyme ube2i (By similarity).</text>
</comment>
<comment type="subunit">
    <text evidence="1">Interacts with sae2 and ube2i. Covalently attached to a number of proteins (By similarity).</text>
</comment>
<comment type="subcellular location">
    <subcellularLocation>
        <location evidence="1">Cytoplasm</location>
    </subcellularLocation>
    <subcellularLocation>
        <location evidence="1">Nucleus</location>
        <location evidence="1">PML body</location>
    </subcellularLocation>
</comment>
<comment type="PTM">
    <text evidence="1">Polymeric chains can be formed through Lys-11 cross-linking.</text>
</comment>
<comment type="PTM">
    <text evidence="1">Cleavage of precursor form by a sentrin-specific protease is necessary for function.</text>
</comment>
<comment type="similarity">
    <text evidence="3">Belongs to the ubiquitin family. SUMO subfamily.</text>
</comment>
<sequence>MSEEKPKEGVKTENDHINLKVAGQDGSVVQFKIKRHTPLSKLMKAYCDRQGLSMRQIRFRFDGQPINETDTPAQLEMEDEDTIDVFQQQTGGVC</sequence>
<keyword id="KW-0963">Cytoplasm</keyword>
<keyword id="KW-1017">Isopeptide bond</keyword>
<keyword id="KW-0539">Nucleus</keyword>
<keyword id="KW-1185">Reference proteome</keyword>
<keyword id="KW-0832">Ubl conjugation</keyword>
<keyword id="KW-0833">Ubl conjugation pathway</keyword>
<name>SUMO3_XENTR</name>
<reference key="1">
    <citation type="submission" date="2006-10" db="EMBL/GenBank/DDBJ databases">
        <authorList>
            <consortium name="Sanger Xenopus tropicalis EST/cDNA project"/>
        </authorList>
    </citation>
    <scope>NUCLEOTIDE SEQUENCE [LARGE SCALE MRNA]</scope>
    <source>
        <tissue>Egg</tissue>
    </source>
</reference>
<reference key="2">
    <citation type="submission" date="2006-06" db="EMBL/GenBank/DDBJ databases">
        <authorList>
            <consortium name="NIH - Xenopus Gene Collection (XGC) project"/>
        </authorList>
    </citation>
    <scope>NUCLEOTIDE SEQUENCE [LARGE SCALE MRNA]</scope>
    <source>
        <tissue>Tail bud</tissue>
    </source>
</reference>
<organism>
    <name type="scientific">Xenopus tropicalis</name>
    <name type="common">Western clawed frog</name>
    <name type="synonym">Silurana tropicalis</name>
    <dbReference type="NCBI Taxonomy" id="8364"/>
    <lineage>
        <taxon>Eukaryota</taxon>
        <taxon>Metazoa</taxon>
        <taxon>Chordata</taxon>
        <taxon>Craniata</taxon>
        <taxon>Vertebrata</taxon>
        <taxon>Euteleostomi</taxon>
        <taxon>Amphibia</taxon>
        <taxon>Batrachia</taxon>
        <taxon>Anura</taxon>
        <taxon>Pipoidea</taxon>
        <taxon>Pipidae</taxon>
        <taxon>Xenopodinae</taxon>
        <taxon>Xenopus</taxon>
        <taxon>Silurana</taxon>
    </lineage>
</organism>
<protein>
    <recommendedName>
        <fullName>Small ubiquitin-related modifier 3</fullName>
        <shortName>SUMO-3</shortName>
    </recommendedName>
</protein>
<accession>Q6DK72</accession>
<dbReference type="EMBL" id="CR761360">
    <property type="protein sequence ID" value="CAJ81372.1"/>
    <property type="molecule type" value="mRNA"/>
</dbReference>
<dbReference type="EMBL" id="BC074674">
    <property type="protein sequence ID" value="AAH74674.1"/>
    <property type="molecule type" value="mRNA"/>
</dbReference>
<dbReference type="RefSeq" id="NP_001004853.1">
    <property type="nucleotide sequence ID" value="NM_001004853.1"/>
</dbReference>
<dbReference type="SMR" id="Q6DK72"/>
<dbReference type="FunCoup" id="Q6DK72">
    <property type="interactions" value="2724"/>
</dbReference>
<dbReference type="STRING" id="8364.ENSXETP00000017894"/>
<dbReference type="DNASU" id="100125978"/>
<dbReference type="GeneID" id="100125978"/>
<dbReference type="KEGG" id="xtr:100125978"/>
<dbReference type="AGR" id="Xenbase:XB-GENE-1004211"/>
<dbReference type="CTD" id="6612"/>
<dbReference type="Xenbase" id="XB-GENE-1004211">
    <property type="gene designation" value="sumo3"/>
</dbReference>
<dbReference type="HOGENOM" id="CLU_148322_2_1_1"/>
<dbReference type="InParanoid" id="Q6DK72"/>
<dbReference type="OMA" id="SKMMNAY"/>
<dbReference type="OrthoDB" id="442921at2759"/>
<dbReference type="PhylomeDB" id="Q6DK72"/>
<dbReference type="Reactome" id="R-XTR-3065679">
    <property type="pathway name" value="SUMO is proteolytically processed"/>
</dbReference>
<dbReference type="Reactome" id="R-XTR-3108214">
    <property type="pathway name" value="SUMOylation of DNA damage response and repair proteins"/>
</dbReference>
<dbReference type="Reactome" id="R-XTR-3232118">
    <property type="pathway name" value="SUMOylation of transcription factors"/>
</dbReference>
<dbReference type="Reactome" id="R-XTR-3899300">
    <property type="pathway name" value="SUMOylation of transcription cofactors"/>
</dbReference>
<dbReference type="Reactome" id="R-XTR-4615885">
    <property type="pathway name" value="SUMOylation of DNA replication proteins"/>
</dbReference>
<dbReference type="Proteomes" id="UP000008143">
    <property type="component" value="Chromosome 9"/>
</dbReference>
<dbReference type="Bgee" id="ENSXETG00000027487">
    <property type="expression patterns" value="Expressed in egg cell and 18 other cell types or tissues"/>
</dbReference>
<dbReference type="GO" id="GO:0005737">
    <property type="term" value="C:cytoplasm"/>
    <property type="evidence" value="ECO:0007669"/>
    <property type="project" value="UniProtKB-SubCell"/>
</dbReference>
<dbReference type="GO" id="GO:0016605">
    <property type="term" value="C:PML body"/>
    <property type="evidence" value="ECO:0007669"/>
    <property type="project" value="UniProtKB-SubCell"/>
</dbReference>
<dbReference type="CDD" id="cd16115">
    <property type="entry name" value="Ubl_SUMO2_3_4"/>
    <property type="match status" value="1"/>
</dbReference>
<dbReference type="FunFam" id="3.10.20.90:FF:000022">
    <property type="entry name" value="Small ubiquitin-related modifier"/>
    <property type="match status" value="1"/>
</dbReference>
<dbReference type="Gene3D" id="3.10.20.90">
    <property type="entry name" value="Phosphatidylinositol 3-kinase Catalytic Subunit, Chain A, domain 1"/>
    <property type="match status" value="1"/>
</dbReference>
<dbReference type="InterPro" id="IPR022617">
    <property type="entry name" value="Rad60/SUMO-like_dom"/>
</dbReference>
<dbReference type="InterPro" id="IPR000626">
    <property type="entry name" value="Ubiquitin-like_dom"/>
</dbReference>
<dbReference type="InterPro" id="IPR029071">
    <property type="entry name" value="Ubiquitin-like_domsf"/>
</dbReference>
<dbReference type="PANTHER" id="PTHR10562">
    <property type="entry name" value="SMALL UBIQUITIN-RELATED MODIFIER"/>
    <property type="match status" value="1"/>
</dbReference>
<dbReference type="Pfam" id="PF11976">
    <property type="entry name" value="Rad60-SLD"/>
    <property type="match status" value="1"/>
</dbReference>
<dbReference type="SMART" id="SM00213">
    <property type="entry name" value="UBQ"/>
    <property type="match status" value="1"/>
</dbReference>
<dbReference type="SUPFAM" id="SSF54236">
    <property type="entry name" value="Ubiquitin-like"/>
    <property type="match status" value="1"/>
</dbReference>
<dbReference type="PROSITE" id="PS50053">
    <property type="entry name" value="UBIQUITIN_2"/>
    <property type="match status" value="1"/>
</dbReference>
<feature type="chain" id="PRO_0000267636" description="Small ubiquitin-related modifier 3">
    <location>
        <begin position="1"/>
        <end position="92"/>
    </location>
</feature>
<feature type="propeptide" id="PRO_0000267637" evidence="1">
    <location>
        <begin position="93"/>
        <end position="94"/>
    </location>
</feature>
<feature type="domain" description="Ubiquitin-like" evidence="2">
    <location>
        <begin position="15"/>
        <end position="92"/>
    </location>
</feature>
<feature type="cross-link" description="Glycyl lysine isopeptide (Lys-Gly) (interchain with G-Cter in SUMO)" evidence="1">
    <location>
        <position position="11"/>
    </location>
</feature>
<feature type="cross-link" description="Glycyl lysine isopeptide (Gly-Lys) (interchain with K-? in acceptor proteins)" evidence="2">
    <location>
        <position position="92"/>
    </location>
</feature>